<feature type="chain" id="PRO_1000214830" description="ATP synthase subunit beta">
    <location>
        <begin position="1"/>
        <end position="483"/>
    </location>
</feature>
<feature type="binding site" evidence="1">
    <location>
        <begin position="169"/>
        <end position="176"/>
    </location>
    <ligand>
        <name>ATP</name>
        <dbReference type="ChEBI" id="CHEBI:30616"/>
    </ligand>
</feature>
<sequence>MTAAVTENNGAGSASAVAGRVVRVIGPVVDVEFPRGAVPELFNALNAEITLPSVAKTLTLEVAQHLGDNLVRTVSMQPTDGLVRGTAVTDSGKPISVPVGDVVKGHVFNALGDCLDTPGLGRDGEQWGIHRKPPAFDQLEGKTEILETGIKVIDLLTPYVKGGKIGLFGGAGVGKTVLIQEMITRIAREFSGTSVFAGVGERTREGTDLHLEMEEMGVLQDTALVFGQMDEPPGTRMRVALSALTMAEYFRDVQGQDVLLFIDNIFRFTQAGSEVSTLLGRMPSAVGYQPTLADEMGELQERITSTRGRSITSLQAIYVPADDYTDPAPATTFAHLDATTELSRPISQMGIYPAVDPLSSTSRILEPGIVGAEHFRVANEVKRILQKYKELQDIIAILGMDELQEEDKVLVGRARRIQKFLGQNFIVAEKFTGEPGSVVPLRDTIEAFDRVCKGEFDHLPEQAFNSCGGLDDVEAAAKKMAGK</sequence>
<protein>
    <recommendedName>
        <fullName evidence="1">ATP synthase subunit beta</fullName>
        <ecNumber evidence="1">7.1.2.2</ecNumber>
    </recommendedName>
    <alternativeName>
        <fullName evidence="1">ATP synthase F1 sector subunit beta</fullName>
    </alternativeName>
    <alternativeName>
        <fullName evidence="1">F-ATPase subunit beta</fullName>
    </alternativeName>
</protein>
<evidence type="ECO:0000255" key="1">
    <source>
        <dbReference type="HAMAP-Rule" id="MF_01347"/>
    </source>
</evidence>
<keyword id="KW-0066">ATP synthesis</keyword>
<keyword id="KW-0067">ATP-binding</keyword>
<keyword id="KW-1003">Cell membrane</keyword>
<keyword id="KW-0139">CF(1)</keyword>
<keyword id="KW-0375">Hydrogen ion transport</keyword>
<keyword id="KW-0406">Ion transport</keyword>
<keyword id="KW-0472">Membrane</keyword>
<keyword id="KW-0547">Nucleotide-binding</keyword>
<keyword id="KW-1278">Translocase</keyword>
<keyword id="KW-0813">Transport</keyword>
<proteinExistence type="inferred from homology"/>
<gene>
    <name evidence="1" type="primary">atpD</name>
    <name type="ordered locus">RER_39050</name>
</gene>
<accession>C1A1X8</accession>
<name>ATPB_RHOE4</name>
<dbReference type="EC" id="7.1.2.2" evidence="1"/>
<dbReference type="EMBL" id="AP008957">
    <property type="protein sequence ID" value="BAH34613.1"/>
    <property type="molecule type" value="Genomic_DNA"/>
</dbReference>
<dbReference type="RefSeq" id="WP_003941349.1">
    <property type="nucleotide sequence ID" value="NC_012490.1"/>
</dbReference>
<dbReference type="SMR" id="C1A1X8"/>
<dbReference type="GeneID" id="93805017"/>
<dbReference type="KEGG" id="rer:RER_39050"/>
<dbReference type="eggNOG" id="COG0055">
    <property type="taxonomic scope" value="Bacteria"/>
</dbReference>
<dbReference type="HOGENOM" id="CLU_022398_0_2_11"/>
<dbReference type="Proteomes" id="UP000002204">
    <property type="component" value="Chromosome"/>
</dbReference>
<dbReference type="GO" id="GO:0005886">
    <property type="term" value="C:plasma membrane"/>
    <property type="evidence" value="ECO:0007669"/>
    <property type="project" value="UniProtKB-SubCell"/>
</dbReference>
<dbReference type="GO" id="GO:0045259">
    <property type="term" value="C:proton-transporting ATP synthase complex"/>
    <property type="evidence" value="ECO:0007669"/>
    <property type="project" value="UniProtKB-KW"/>
</dbReference>
<dbReference type="GO" id="GO:0005524">
    <property type="term" value="F:ATP binding"/>
    <property type="evidence" value="ECO:0007669"/>
    <property type="project" value="UniProtKB-UniRule"/>
</dbReference>
<dbReference type="GO" id="GO:0016887">
    <property type="term" value="F:ATP hydrolysis activity"/>
    <property type="evidence" value="ECO:0007669"/>
    <property type="project" value="InterPro"/>
</dbReference>
<dbReference type="GO" id="GO:0046933">
    <property type="term" value="F:proton-transporting ATP synthase activity, rotational mechanism"/>
    <property type="evidence" value="ECO:0007669"/>
    <property type="project" value="UniProtKB-UniRule"/>
</dbReference>
<dbReference type="CDD" id="cd18110">
    <property type="entry name" value="ATP-synt_F1_beta_C"/>
    <property type="match status" value="1"/>
</dbReference>
<dbReference type="CDD" id="cd18115">
    <property type="entry name" value="ATP-synt_F1_beta_N"/>
    <property type="match status" value="1"/>
</dbReference>
<dbReference type="CDD" id="cd01133">
    <property type="entry name" value="F1-ATPase_beta_CD"/>
    <property type="match status" value="1"/>
</dbReference>
<dbReference type="FunFam" id="1.10.1140.10:FF:000001">
    <property type="entry name" value="ATP synthase subunit beta"/>
    <property type="match status" value="1"/>
</dbReference>
<dbReference type="FunFam" id="2.40.10.170:FF:000005">
    <property type="entry name" value="ATP synthase subunit beta"/>
    <property type="match status" value="1"/>
</dbReference>
<dbReference type="FunFam" id="3.40.50.300:FF:000004">
    <property type="entry name" value="ATP synthase subunit beta"/>
    <property type="match status" value="1"/>
</dbReference>
<dbReference type="Gene3D" id="2.40.10.170">
    <property type="match status" value="1"/>
</dbReference>
<dbReference type="Gene3D" id="1.10.1140.10">
    <property type="entry name" value="Bovine Mitochondrial F1-atpase, Atp Synthase Beta Chain, Chain D, domain 3"/>
    <property type="match status" value="1"/>
</dbReference>
<dbReference type="Gene3D" id="3.40.50.300">
    <property type="entry name" value="P-loop containing nucleotide triphosphate hydrolases"/>
    <property type="match status" value="1"/>
</dbReference>
<dbReference type="HAMAP" id="MF_01347">
    <property type="entry name" value="ATP_synth_beta_bact"/>
    <property type="match status" value="1"/>
</dbReference>
<dbReference type="InterPro" id="IPR003593">
    <property type="entry name" value="AAA+_ATPase"/>
</dbReference>
<dbReference type="InterPro" id="IPR055190">
    <property type="entry name" value="ATP-synt_VA_C"/>
</dbReference>
<dbReference type="InterPro" id="IPR005722">
    <property type="entry name" value="ATP_synth_F1_bsu"/>
</dbReference>
<dbReference type="InterPro" id="IPR050053">
    <property type="entry name" value="ATPase_alpha/beta_chains"/>
</dbReference>
<dbReference type="InterPro" id="IPR004100">
    <property type="entry name" value="ATPase_F1/V1/A1_a/bsu_N"/>
</dbReference>
<dbReference type="InterPro" id="IPR036121">
    <property type="entry name" value="ATPase_F1/V1/A1_a/bsu_N_sf"/>
</dbReference>
<dbReference type="InterPro" id="IPR000194">
    <property type="entry name" value="ATPase_F1/V1/A1_a/bsu_nucl-bd"/>
</dbReference>
<dbReference type="InterPro" id="IPR024034">
    <property type="entry name" value="ATPase_F1/V1_b/a_C"/>
</dbReference>
<dbReference type="InterPro" id="IPR027417">
    <property type="entry name" value="P-loop_NTPase"/>
</dbReference>
<dbReference type="NCBIfam" id="TIGR01039">
    <property type="entry name" value="atpD"/>
    <property type="match status" value="1"/>
</dbReference>
<dbReference type="PANTHER" id="PTHR15184">
    <property type="entry name" value="ATP SYNTHASE"/>
    <property type="match status" value="1"/>
</dbReference>
<dbReference type="PANTHER" id="PTHR15184:SF71">
    <property type="entry name" value="ATP SYNTHASE SUBUNIT BETA, MITOCHONDRIAL"/>
    <property type="match status" value="1"/>
</dbReference>
<dbReference type="Pfam" id="PF00006">
    <property type="entry name" value="ATP-synt_ab"/>
    <property type="match status" value="1"/>
</dbReference>
<dbReference type="Pfam" id="PF02874">
    <property type="entry name" value="ATP-synt_ab_N"/>
    <property type="match status" value="1"/>
</dbReference>
<dbReference type="Pfam" id="PF22919">
    <property type="entry name" value="ATP-synt_VA_C"/>
    <property type="match status" value="1"/>
</dbReference>
<dbReference type="SMART" id="SM00382">
    <property type="entry name" value="AAA"/>
    <property type="match status" value="1"/>
</dbReference>
<dbReference type="SUPFAM" id="SSF47917">
    <property type="entry name" value="C-terminal domain of alpha and beta subunits of F1 ATP synthase"/>
    <property type="match status" value="1"/>
</dbReference>
<dbReference type="SUPFAM" id="SSF50615">
    <property type="entry name" value="N-terminal domain of alpha and beta subunits of F1 ATP synthase"/>
    <property type="match status" value="1"/>
</dbReference>
<dbReference type="SUPFAM" id="SSF52540">
    <property type="entry name" value="P-loop containing nucleoside triphosphate hydrolases"/>
    <property type="match status" value="1"/>
</dbReference>
<organism>
    <name type="scientific">Rhodococcus erythropolis (strain PR4 / NBRC 100887)</name>
    <dbReference type="NCBI Taxonomy" id="234621"/>
    <lineage>
        <taxon>Bacteria</taxon>
        <taxon>Bacillati</taxon>
        <taxon>Actinomycetota</taxon>
        <taxon>Actinomycetes</taxon>
        <taxon>Mycobacteriales</taxon>
        <taxon>Nocardiaceae</taxon>
        <taxon>Rhodococcus</taxon>
        <taxon>Rhodococcus erythropolis group</taxon>
    </lineage>
</organism>
<reference key="1">
    <citation type="submission" date="2005-03" db="EMBL/GenBank/DDBJ databases">
        <title>Comparison of the complete genome sequences of Rhodococcus erythropolis PR4 and Rhodococcus opacus B4.</title>
        <authorList>
            <person name="Takarada H."/>
            <person name="Sekine M."/>
            <person name="Hosoyama A."/>
            <person name="Yamada R."/>
            <person name="Fujisawa T."/>
            <person name="Omata S."/>
            <person name="Shimizu A."/>
            <person name="Tsukatani N."/>
            <person name="Tanikawa S."/>
            <person name="Fujita N."/>
            <person name="Harayama S."/>
        </authorList>
    </citation>
    <scope>NUCLEOTIDE SEQUENCE [LARGE SCALE GENOMIC DNA]</scope>
    <source>
        <strain>PR4 / NBRC 100887</strain>
    </source>
</reference>
<comment type="function">
    <text evidence="1">Produces ATP from ADP in the presence of a proton gradient across the membrane. The catalytic sites are hosted primarily by the beta subunits.</text>
</comment>
<comment type="catalytic activity">
    <reaction evidence="1">
        <text>ATP + H2O + 4 H(+)(in) = ADP + phosphate + 5 H(+)(out)</text>
        <dbReference type="Rhea" id="RHEA:57720"/>
        <dbReference type="ChEBI" id="CHEBI:15377"/>
        <dbReference type="ChEBI" id="CHEBI:15378"/>
        <dbReference type="ChEBI" id="CHEBI:30616"/>
        <dbReference type="ChEBI" id="CHEBI:43474"/>
        <dbReference type="ChEBI" id="CHEBI:456216"/>
        <dbReference type="EC" id="7.1.2.2"/>
    </reaction>
</comment>
<comment type="subunit">
    <text evidence="1">F-type ATPases have 2 components, CF(1) - the catalytic core - and CF(0) - the membrane proton channel. CF(1) has five subunits: alpha(3), beta(3), gamma(1), delta(1), epsilon(1). CF(0) has three main subunits: a(1), b(2) and c(9-12). The alpha and beta chains form an alternating ring which encloses part of the gamma chain. CF(1) is attached to CF(0) by a central stalk formed by the gamma and epsilon chains, while a peripheral stalk is formed by the delta and b chains.</text>
</comment>
<comment type="subcellular location">
    <subcellularLocation>
        <location evidence="1">Cell membrane</location>
        <topology evidence="1">Peripheral membrane protein</topology>
    </subcellularLocation>
</comment>
<comment type="similarity">
    <text evidence="1">Belongs to the ATPase alpha/beta chains family.</text>
</comment>